<comment type="function">
    <text evidence="1">Catalyzes the reductive methylation of 2'-deoxyuridine-5'-monophosphate (dUMP) to 2'-deoxythymidine-5'-monophosphate (dTMP) while utilizing 5,10-methylenetetrahydrofolate (mTHF) as the methyl donor and reductant in the reaction, yielding dihydrofolate (DHF) as a by-product. This enzymatic reaction provides an intracellular de novo source of dTMP, an essential precursor for DNA biosynthesis.</text>
</comment>
<comment type="catalytic activity">
    <reaction evidence="1">
        <text>dUMP + (6R)-5,10-methylene-5,6,7,8-tetrahydrofolate = 7,8-dihydrofolate + dTMP</text>
        <dbReference type="Rhea" id="RHEA:12104"/>
        <dbReference type="ChEBI" id="CHEBI:15636"/>
        <dbReference type="ChEBI" id="CHEBI:57451"/>
        <dbReference type="ChEBI" id="CHEBI:63528"/>
        <dbReference type="ChEBI" id="CHEBI:246422"/>
        <dbReference type="EC" id="2.1.1.45"/>
    </reaction>
</comment>
<comment type="pathway">
    <text evidence="1">Pyrimidine metabolism; dTTP biosynthesis.</text>
</comment>
<comment type="subunit">
    <text evidence="1">Homodimer.</text>
</comment>
<comment type="subcellular location">
    <subcellularLocation>
        <location evidence="1">Cytoplasm</location>
    </subcellularLocation>
</comment>
<comment type="similarity">
    <text evidence="1">Belongs to the thymidylate synthase family. Bacterial-type ThyA subfamily.</text>
</comment>
<evidence type="ECO:0000255" key="1">
    <source>
        <dbReference type="HAMAP-Rule" id="MF_00008"/>
    </source>
</evidence>
<organism>
    <name type="scientific">Xanthomonas oryzae pv. oryzae (strain MAFF 311018)</name>
    <dbReference type="NCBI Taxonomy" id="342109"/>
    <lineage>
        <taxon>Bacteria</taxon>
        <taxon>Pseudomonadati</taxon>
        <taxon>Pseudomonadota</taxon>
        <taxon>Gammaproteobacteria</taxon>
        <taxon>Lysobacterales</taxon>
        <taxon>Lysobacteraceae</taxon>
        <taxon>Xanthomonas</taxon>
    </lineage>
</organism>
<reference key="1">
    <citation type="journal article" date="2005" name="Jpn. Agric. Res. Q.">
        <title>Genome sequence of Xanthomonas oryzae pv. oryzae suggests contribution of large numbers of effector genes and insertion sequences to its race diversity.</title>
        <authorList>
            <person name="Ochiai H."/>
            <person name="Inoue Y."/>
            <person name="Takeya M."/>
            <person name="Sasaki A."/>
            <person name="Kaku H."/>
        </authorList>
    </citation>
    <scope>NUCLEOTIDE SEQUENCE [LARGE SCALE GENOMIC DNA]</scope>
    <source>
        <strain>MAFF 311018</strain>
    </source>
</reference>
<keyword id="KW-0963">Cytoplasm</keyword>
<keyword id="KW-0489">Methyltransferase</keyword>
<keyword id="KW-0545">Nucleotide biosynthesis</keyword>
<keyword id="KW-0808">Transferase</keyword>
<name>TYSY_XANOM</name>
<gene>
    <name evidence="1" type="primary">thyA</name>
    <name type="ordered locus">XOO3543</name>
</gene>
<proteinExistence type="inferred from homology"/>
<dbReference type="EC" id="2.1.1.45" evidence="1"/>
<dbReference type="EMBL" id="AP008229">
    <property type="protein sequence ID" value="BAE70298.1"/>
    <property type="molecule type" value="Genomic_DNA"/>
</dbReference>
<dbReference type="RefSeq" id="WP_011260172.1">
    <property type="nucleotide sequence ID" value="NC_007705.1"/>
</dbReference>
<dbReference type="SMR" id="Q2NZH9"/>
<dbReference type="KEGG" id="xom:XOO3543"/>
<dbReference type="HOGENOM" id="CLU_021669_0_0_6"/>
<dbReference type="UniPathway" id="UPA00575"/>
<dbReference type="GO" id="GO:0005829">
    <property type="term" value="C:cytosol"/>
    <property type="evidence" value="ECO:0007669"/>
    <property type="project" value="TreeGrafter"/>
</dbReference>
<dbReference type="GO" id="GO:0004799">
    <property type="term" value="F:thymidylate synthase activity"/>
    <property type="evidence" value="ECO:0007669"/>
    <property type="project" value="UniProtKB-UniRule"/>
</dbReference>
<dbReference type="GO" id="GO:0006231">
    <property type="term" value="P:dTMP biosynthetic process"/>
    <property type="evidence" value="ECO:0007669"/>
    <property type="project" value="UniProtKB-UniRule"/>
</dbReference>
<dbReference type="GO" id="GO:0006235">
    <property type="term" value="P:dTTP biosynthetic process"/>
    <property type="evidence" value="ECO:0007669"/>
    <property type="project" value="UniProtKB-UniRule"/>
</dbReference>
<dbReference type="GO" id="GO:0032259">
    <property type="term" value="P:methylation"/>
    <property type="evidence" value="ECO:0007669"/>
    <property type="project" value="UniProtKB-KW"/>
</dbReference>
<dbReference type="CDD" id="cd00351">
    <property type="entry name" value="TS_Pyrimidine_HMase"/>
    <property type="match status" value="1"/>
</dbReference>
<dbReference type="FunFam" id="3.30.572.10:FF:000001">
    <property type="entry name" value="Thymidylate synthase"/>
    <property type="match status" value="1"/>
</dbReference>
<dbReference type="Gene3D" id="3.30.572.10">
    <property type="entry name" value="Thymidylate synthase/dCMP hydroxymethylase domain"/>
    <property type="match status" value="1"/>
</dbReference>
<dbReference type="HAMAP" id="MF_00008">
    <property type="entry name" value="Thymidy_synth_bact"/>
    <property type="match status" value="1"/>
</dbReference>
<dbReference type="InterPro" id="IPR045097">
    <property type="entry name" value="Thymidate_synth/dCMP_Mease"/>
</dbReference>
<dbReference type="InterPro" id="IPR023451">
    <property type="entry name" value="Thymidate_synth/dCMP_Mease_dom"/>
</dbReference>
<dbReference type="InterPro" id="IPR036926">
    <property type="entry name" value="Thymidate_synth/dCMP_Mease_sf"/>
</dbReference>
<dbReference type="InterPro" id="IPR000398">
    <property type="entry name" value="Thymidylate_synthase"/>
</dbReference>
<dbReference type="InterPro" id="IPR020940">
    <property type="entry name" value="Thymidylate_synthase_AS"/>
</dbReference>
<dbReference type="NCBIfam" id="NF002497">
    <property type="entry name" value="PRK01827.1-3"/>
    <property type="match status" value="1"/>
</dbReference>
<dbReference type="NCBIfam" id="NF002499">
    <property type="entry name" value="PRK01827.1-5"/>
    <property type="match status" value="1"/>
</dbReference>
<dbReference type="NCBIfam" id="TIGR03284">
    <property type="entry name" value="thym_sym"/>
    <property type="match status" value="2"/>
</dbReference>
<dbReference type="PANTHER" id="PTHR11548:SF9">
    <property type="entry name" value="THYMIDYLATE SYNTHASE"/>
    <property type="match status" value="1"/>
</dbReference>
<dbReference type="PANTHER" id="PTHR11548">
    <property type="entry name" value="THYMIDYLATE SYNTHASE 1"/>
    <property type="match status" value="1"/>
</dbReference>
<dbReference type="Pfam" id="PF00303">
    <property type="entry name" value="Thymidylat_synt"/>
    <property type="match status" value="1"/>
</dbReference>
<dbReference type="PRINTS" id="PR00108">
    <property type="entry name" value="THYMDSNTHASE"/>
</dbReference>
<dbReference type="SUPFAM" id="SSF55831">
    <property type="entry name" value="Thymidylate synthase/dCMP hydroxymethylase"/>
    <property type="match status" value="1"/>
</dbReference>
<dbReference type="PROSITE" id="PS00091">
    <property type="entry name" value="THYMIDYLATE_SYNTHASE"/>
    <property type="match status" value="1"/>
</dbReference>
<sequence length="264" mass="30105">MKPYLDLLQHVLEHGAEKSDRTGTGTRSVFGWQMRFDLNDGFPLVTTKKLHLRSIIHELLWFLQGDTNIGYLSDNQVRIWDEWADDNGDLGPVYGKQWRRWTGPDGVEIDQMQWLVDEIKRNPDSRRLVISAWNVGELPQMALMPCHSLFQFYVVNGKLSCQLYQRSGDIFLGVPFNIASYALLTHMVAQATGLGVGDFVHTLGDAHLYSNHFDQARKQLTRTPRALPTLRLNPEVTDLFAFRFEDIAIEGYDPHPAIKAPVAV</sequence>
<protein>
    <recommendedName>
        <fullName evidence="1">Thymidylate synthase</fullName>
        <shortName evidence="1">TS</shortName>
        <shortName evidence="1">TSase</shortName>
        <ecNumber evidence="1">2.1.1.45</ecNumber>
    </recommendedName>
</protein>
<accession>Q2NZH9</accession>
<feature type="chain" id="PRO_1000000704" description="Thymidylate synthase">
    <location>
        <begin position="1"/>
        <end position="264"/>
    </location>
</feature>
<feature type="active site" description="Nucleophile" evidence="1">
    <location>
        <position position="146"/>
    </location>
</feature>
<feature type="binding site" description="in other chain" evidence="1">
    <location>
        <position position="21"/>
    </location>
    <ligand>
        <name>dUMP</name>
        <dbReference type="ChEBI" id="CHEBI:246422"/>
        <note>ligand shared between dimeric partners</note>
    </ligand>
</feature>
<feature type="binding site" evidence="1">
    <location>
        <position position="51"/>
    </location>
    <ligand>
        <name>(6R)-5,10-methylene-5,6,7,8-tetrahydrofolate</name>
        <dbReference type="ChEBI" id="CHEBI:15636"/>
    </ligand>
</feature>
<feature type="binding site" evidence="1">
    <location>
        <begin position="126"/>
        <end position="127"/>
    </location>
    <ligand>
        <name>dUMP</name>
        <dbReference type="ChEBI" id="CHEBI:246422"/>
        <note>ligand shared between dimeric partners</note>
    </ligand>
</feature>
<feature type="binding site" description="in other chain" evidence="1">
    <location>
        <begin position="166"/>
        <end position="169"/>
    </location>
    <ligand>
        <name>dUMP</name>
        <dbReference type="ChEBI" id="CHEBI:246422"/>
        <note>ligand shared between dimeric partners</note>
    </ligand>
</feature>
<feature type="binding site" evidence="1">
    <location>
        <position position="169"/>
    </location>
    <ligand>
        <name>(6R)-5,10-methylene-5,6,7,8-tetrahydrofolate</name>
        <dbReference type="ChEBI" id="CHEBI:15636"/>
    </ligand>
</feature>
<feature type="binding site" description="in other chain" evidence="1">
    <location>
        <position position="177"/>
    </location>
    <ligand>
        <name>dUMP</name>
        <dbReference type="ChEBI" id="CHEBI:246422"/>
        <note>ligand shared between dimeric partners</note>
    </ligand>
</feature>
<feature type="binding site" description="in other chain" evidence="1">
    <location>
        <begin position="207"/>
        <end position="209"/>
    </location>
    <ligand>
        <name>dUMP</name>
        <dbReference type="ChEBI" id="CHEBI:246422"/>
        <note>ligand shared between dimeric partners</note>
    </ligand>
</feature>
<feature type="binding site" evidence="1">
    <location>
        <position position="263"/>
    </location>
    <ligand>
        <name>(6R)-5,10-methylene-5,6,7,8-tetrahydrofolate</name>
        <dbReference type="ChEBI" id="CHEBI:15636"/>
    </ligand>
</feature>